<feature type="chain" id="PRO_0000366014" description="Eukaryotic translation initiation factor 3 subunit M">
    <location>
        <begin position="1"/>
        <end position="466"/>
    </location>
</feature>
<feature type="domain" description="PCI" evidence="2">
    <location>
        <begin position="211"/>
        <end position="378"/>
    </location>
</feature>
<feature type="region of interest" description="Disordered" evidence="3">
    <location>
        <begin position="40"/>
        <end position="62"/>
    </location>
</feature>
<feature type="region of interest" description="Disordered" evidence="3">
    <location>
        <begin position="424"/>
        <end position="466"/>
    </location>
</feature>
<feature type="compositionally biased region" description="Basic and acidic residues" evidence="3">
    <location>
        <begin position="433"/>
        <end position="443"/>
    </location>
</feature>
<feature type="compositionally biased region" description="Low complexity" evidence="3">
    <location>
        <begin position="451"/>
        <end position="460"/>
    </location>
</feature>
<keyword id="KW-0963">Cytoplasm</keyword>
<keyword id="KW-0396">Initiation factor</keyword>
<keyword id="KW-0648">Protein biosynthesis</keyword>
<keyword id="KW-1185">Reference proteome</keyword>
<protein>
    <recommendedName>
        <fullName evidence="1">Eukaryotic translation initiation factor 3 subunit M</fullName>
        <shortName evidence="1">eIF3m</shortName>
    </recommendedName>
</protein>
<sequence length="466" mass="50769">MPAPTTTLLIEGSFSELADEFAQYLDALRKSEGTTTIQAEISPLLEPLRQQEQSDAEPDRKQRDEVLKKLVSAASVLNNAPEKEIISAYNLLVHLIHYASDPDMFLSRICSYLAKPITSSAQFGPSLAISILSTIFNTLAPTDSSRFHVFLGIVAVIRQSGSTVAFEALKPQLTAQLPTWLSSWELDEEEAQRLHLAVADAAQAAGDPELAQTHILQALQTIPAAQASSKEARDLAIRALTSALTHPAVFDFTPLTASDAVQALRSSDSTLFELLEIFTADTLDAYEAFVTATPLAGISGGVLADAGEALQNKMRLLTLASLAASTPSRSLPYATIAASLRVPAEDVEKWVIDTIRAGLVEGKLSQLRSEFLVHRATYRVFGEKQWAEVQGRLMVWRRSLENVLGVLRTERERFVRESLQAAAAAEEAAQGKSNDKGNKSGDRRQRHGNNQQSQQQQQPQEVAAAE</sequence>
<organism>
    <name type="scientific">Aspergillus oryzae (strain ATCC 42149 / RIB 40)</name>
    <name type="common">Yellow koji mold</name>
    <dbReference type="NCBI Taxonomy" id="510516"/>
    <lineage>
        <taxon>Eukaryota</taxon>
        <taxon>Fungi</taxon>
        <taxon>Dikarya</taxon>
        <taxon>Ascomycota</taxon>
        <taxon>Pezizomycotina</taxon>
        <taxon>Eurotiomycetes</taxon>
        <taxon>Eurotiomycetidae</taxon>
        <taxon>Eurotiales</taxon>
        <taxon>Aspergillaceae</taxon>
        <taxon>Aspergillus</taxon>
        <taxon>Aspergillus subgen. Circumdati</taxon>
    </lineage>
</organism>
<evidence type="ECO:0000255" key="1">
    <source>
        <dbReference type="HAMAP-Rule" id="MF_03012"/>
    </source>
</evidence>
<evidence type="ECO:0000255" key="2">
    <source>
        <dbReference type="PROSITE-ProRule" id="PRU01185"/>
    </source>
</evidence>
<evidence type="ECO:0000256" key="3">
    <source>
        <dbReference type="SAM" id="MobiDB-lite"/>
    </source>
</evidence>
<name>EIF3M_ASPOR</name>
<gene>
    <name type="ORF">AO090026000816</name>
</gene>
<dbReference type="EMBL" id="BA000051">
    <property type="protein sequence ID" value="BAE60216.1"/>
    <property type="molecule type" value="Genomic_DNA"/>
</dbReference>
<dbReference type="RefSeq" id="XP_001822218.1">
    <property type="nucleotide sequence ID" value="XM_001822166.3"/>
</dbReference>
<dbReference type="SMR" id="Q2UDZ9"/>
<dbReference type="STRING" id="510516.Q2UDZ9"/>
<dbReference type="EnsemblFungi" id="BAE60216">
    <property type="protein sequence ID" value="BAE60216"/>
    <property type="gene ID" value="AO090026000816"/>
</dbReference>
<dbReference type="GeneID" id="5994246"/>
<dbReference type="KEGG" id="aor:AO090026000816"/>
<dbReference type="VEuPathDB" id="FungiDB:AO090026000816"/>
<dbReference type="HOGENOM" id="CLU_035254_0_1_1"/>
<dbReference type="OMA" id="FNDEHKG"/>
<dbReference type="OrthoDB" id="113254at5052"/>
<dbReference type="Proteomes" id="UP000006564">
    <property type="component" value="Chromosome 3"/>
</dbReference>
<dbReference type="GO" id="GO:0016282">
    <property type="term" value="C:eukaryotic 43S preinitiation complex"/>
    <property type="evidence" value="ECO:0007669"/>
    <property type="project" value="UniProtKB-UniRule"/>
</dbReference>
<dbReference type="GO" id="GO:0033290">
    <property type="term" value="C:eukaryotic 48S preinitiation complex"/>
    <property type="evidence" value="ECO:0007669"/>
    <property type="project" value="UniProtKB-UniRule"/>
</dbReference>
<dbReference type="GO" id="GO:0071541">
    <property type="term" value="C:eukaryotic translation initiation factor 3 complex, eIF3m"/>
    <property type="evidence" value="ECO:0007669"/>
    <property type="project" value="UniProtKB-UniRule"/>
</dbReference>
<dbReference type="GO" id="GO:0003743">
    <property type="term" value="F:translation initiation factor activity"/>
    <property type="evidence" value="ECO:0007669"/>
    <property type="project" value="UniProtKB-UniRule"/>
</dbReference>
<dbReference type="GO" id="GO:0001732">
    <property type="term" value="P:formation of cytoplasmic translation initiation complex"/>
    <property type="evidence" value="ECO:0007669"/>
    <property type="project" value="UniProtKB-UniRule"/>
</dbReference>
<dbReference type="HAMAP" id="MF_03012">
    <property type="entry name" value="eIF3m"/>
    <property type="match status" value="1"/>
</dbReference>
<dbReference type="InterPro" id="IPR045237">
    <property type="entry name" value="COPS7/eIF3m"/>
</dbReference>
<dbReference type="InterPro" id="IPR027528">
    <property type="entry name" value="eIF3m"/>
</dbReference>
<dbReference type="InterPro" id="IPR040750">
    <property type="entry name" value="eIF3m_C_helix"/>
</dbReference>
<dbReference type="InterPro" id="IPR000717">
    <property type="entry name" value="PCI_dom"/>
</dbReference>
<dbReference type="PANTHER" id="PTHR15350">
    <property type="entry name" value="COP9 SIGNALOSOME COMPLEX SUBUNIT 7/DENDRITIC CELL PROTEIN GA17"/>
    <property type="match status" value="1"/>
</dbReference>
<dbReference type="PANTHER" id="PTHR15350:SF2">
    <property type="entry name" value="EUKARYOTIC TRANSLATION INITIATION FACTOR 3 SUBUNIT M"/>
    <property type="match status" value="1"/>
</dbReference>
<dbReference type="Pfam" id="PF18005">
    <property type="entry name" value="eIF3m_C_helix"/>
    <property type="match status" value="1"/>
</dbReference>
<dbReference type="Pfam" id="PF01399">
    <property type="entry name" value="PCI"/>
    <property type="match status" value="1"/>
</dbReference>
<dbReference type="SMART" id="SM00088">
    <property type="entry name" value="PINT"/>
    <property type="match status" value="1"/>
</dbReference>
<dbReference type="PROSITE" id="PS50250">
    <property type="entry name" value="PCI"/>
    <property type="match status" value="1"/>
</dbReference>
<comment type="function">
    <text evidence="1">Component of the eukaryotic translation initiation factor 3 (eIF-3) complex, which is involved in protein synthesis of a specialized repertoire of mRNAs and, together with other initiation factors, stimulates binding of mRNA and methionyl-tRNAi to the 40S ribosome. The eIF-3 complex specifically targets and initiates translation of a subset of mRNAs involved in cell proliferation.</text>
</comment>
<comment type="subunit">
    <text evidence="1">Component of the eukaryotic translation initiation factor 3 (eIF-3) complex.</text>
</comment>
<comment type="subcellular location">
    <subcellularLocation>
        <location evidence="1">Cytoplasm</location>
    </subcellularLocation>
</comment>
<comment type="similarity">
    <text evidence="1">Belongs to the eIF-3 subunit M family.</text>
</comment>
<reference key="1">
    <citation type="journal article" date="2005" name="Nature">
        <title>Genome sequencing and analysis of Aspergillus oryzae.</title>
        <authorList>
            <person name="Machida M."/>
            <person name="Asai K."/>
            <person name="Sano M."/>
            <person name="Tanaka T."/>
            <person name="Kumagai T."/>
            <person name="Terai G."/>
            <person name="Kusumoto K."/>
            <person name="Arima T."/>
            <person name="Akita O."/>
            <person name="Kashiwagi Y."/>
            <person name="Abe K."/>
            <person name="Gomi K."/>
            <person name="Horiuchi H."/>
            <person name="Kitamoto K."/>
            <person name="Kobayashi T."/>
            <person name="Takeuchi M."/>
            <person name="Denning D.W."/>
            <person name="Galagan J.E."/>
            <person name="Nierman W.C."/>
            <person name="Yu J."/>
            <person name="Archer D.B."/>
            <person name="Bennett J.W."/>
            <person name="Bhatnagar D."/>
            <person name="Cleveland T.E."/>
            <person name="Fedorova N.D."/>
            <person name="Gotoh O."/>
            <person name="Horikawa H."/>
            <person name="Hosoyama A."/>
            <person name="Ichinomiya M."/>
            <person name="Igarashi R."/>
            <person name="Iwashita K."/>
            <person name="Juvvadi P.R."/>
            <person name="Kato M."/>
            <person name="Kato Y."/>
            <person name="Kin T."/>
            <person name="Kokubun A."/>
            <person name="Maeda H."/>
            <person name="Maeyama N."/>
            <person name="Maruyama J."/>
            <person name="Nagasaki H."/>
            <person name="Nakajima T."/>
            <person name="Oda K."/>
            <person name="Okada K."/>
            <person name="Paulsen I."/>
            <person name="Sakamoto K."/>
            <person name="Sawano T."/>
            <person name="Takahashi M."/>
            <person name="Takase K."/>
            <person name="Terabayashi Y."/>
            <person name="Wortman J.R."/>
            <person name="Yamada O."/>
            <person name="Yamagata Y."/>
            <person name="Anazawa H."/>
            <person name="Hata Y."/>
            <person name="Koide Y."/>
            <person name="Komori T."/>
            <person name="Koyama Y."/>
            <person name="Minetoki T."/>
            <person name="Suharnan S."/>
            <person name="Tanaka A."/>
            <person name="Isono K."/>
            <person name="Kuhara S."/>
            <person name="Ogasawara N."/>
            <person name="Kikuchi H."/>
        </authorList>
    </citation>
    <scope>NUCLEOTIDE SEQUENCE [LARGE SCALE GENOMIC DNA]</scope>
    <source>
        <strain>ATCC 42149 / RIB 40</strain>
    </source>
</reference>
<proteinExistence type="inferred from homology"/>
<accession>Q2UDZ9</accession>